<feature type="chain" id="PRO_0000156386" description="UPF0173 metal-dependent hydrolase SH1218">
    <location>
        <begin position="1"/>
        <end position="229"/>
    </location>
</feature>
<name>Y1218_STAHJ</name>
<evidence type="ECO:0000255" key="1">
    <source>
        <dbReference type="HAMAP-Rule" id="MF_00457"/>
    </source>
</evidence>
<reference key="1">
    <citation type="journal article" date="2005" name="J. Bacteriol.">
        <title>Whole-genome sequencing of Staphylococcus haemolyticus uncovers the extreme plasticity of its genome and the evolution of human-colonizing staphylococcal species.</title>
        <authorList>
            <person name="Takeuchi F."/>
            <person name="Watanabe S."/>
            <person name="Baba T."/>
            <person name="Yuzawa H."/>
            <person name="Ito T."/>
            <person name="Morimoto Y."/>
            <person name="Kuroda M."/>
            <person name="Cui L."/>
            <person name="Takahashi M."/>
            <person name="Ankai A."/>
            <person name="Baba S."/>
            <person name="Fukui S."/>
            <person name="Lee J.C."/>
            <person name="Hiramatsu K."/>
        </authorList>
    </citation>
    <scope>NUCLEOTIDE SEQUENCE [LARGE SCALE GENOMIC DNA]</scope>
    <source>
        <strain>JCSC1435</strain>
    </source>
</reference>
<organism>
    <name type="scientific">Staphylococcus haemolyticus (strain JCSC1435)</name>
    <dbReference type="NCBI Taxonomy" id="279808"/>
    <lineage>
        <taxon>Bacteria</taxon>
        <taxon>Bacillati</taxon>
        <taxon>Bacillota</taxon>
        <taxon>Bacilli</taxon>
        <taxon>Bacillales</taxon>
        <taxon>Staphylococcaceae</taxon>
        <taxon>Staphylococcus</taxon>
    </lineage>
</organism>
<proteinExistence type="inferred from homology"/>
<accession>Q4L748</accession>
<dbReference type="EMBL" id="AP006716">
    <property type="protein sequence ID" value="BAE04527.1"/>
    <property type="molecule type" value="Genomic_DNA"/>
</dbReference>
<dbReference type="RefSeq" id="WP_011275517.1">
    <property type="nucleotide sequence ID" value="NC_007168.1"/>
</dbReference>
<dbReference type="SMR" id="Q4L748"/>
<dbReference type="KEGG" id="sha:SH1218"/>
<dbReference type="eggNOG" id="COG2220">
    <property type="taxonomic scope" value="Bacteria"/>
</dbReference>
<dbReference type="HOGENOM" id="CLU_070010_4_1_9"/>
<dbReference type="OrthoDB" id="9789133at2"/>
<dbReference type="Proteomes" id="UP000000543">
    <property type="component" value="Chromosome"/>
</dbReference>
<dbReference type="GO" id="GO:0016787">
    <property type="term" value="F:hydrolase activity"/>
    <property type="evidence" value="ECO:0007669"/>
    <property type="project" value="UniProtKB-UniRule"/>
</dbReference>
<dbReference type="Gene3D" id="3.60.15.10">
    <property type="entry name" value="Ribonuclease Z/Hydroxyacylglutathione hydrolase-like"/>
    <property type="match status" value="1"/>
</dbReference>
<dbReference type="HAMAP" id="MF_00457">
    <property type="entry name" value="UPF0173"/>
    <property type="match status" value="1"/>
</dbReference>
<dbReference type="InterPro" id="IPR001279">
    <property type="entry name" value="Metallo-B-lactamas"/>
</dbReference>
<dbReference type="InterPro" id="IPR036866">
    <property type="entry name" value="RibonucZ/Hydroxyglut_hydro"/>
</dbReference>
<dbReference type="InterPro" id="IPR022877">
    <property type="entry name" value="UPF0173"/>
</dbReference>
<dbReference type="InterPro" id="IPR050114">
    <property type="entry name" value="UPF0173_UPF0282_UlaG_hydrolase"/>
</dbReference>
<dbReference type="NCBIfam" id="NF001911">
    <property type="entry name" value="PRK00685.1"/>
    <property type="match status" value="1"/>
</dbReference>
<dbReference type="PANTHER" id="PTHR43546:SF3">
    <property type="entry name" value="UPF0173 METAL-DEPENDENT HYDROLASE MJ1163"/>
    <property type="match status" value="1"/>
</dbReference>
<dbReference type="PANTHER" id="PTHR43546">
    <property type="entry name" value="UPF0173 METAL-DEPENDENT HYDROLASE MJ1163-RELATED"/>
    <property type="match status" value="1"/>
</dbReference>
<dbReference type="Pfam" id="PF12706">
    <property type="entry name" value="Lactamase_B_2"/>
    <property type="match status" value="1"/>
</dbReference>
<dbReference type="SMART" id="SM00849">
    <property type="entry name" value="Lactamase_B"/>
    <property type="match status" value="1"/>
</dbReference>
<dbReference type="SUPFAM" id="SSF56281">
    <property type="entry name" value="Metallo-hydrolase/oxidoreductase"/>
    <property type="match status" value="1"/>
</dbReference>
<protein>
    <recommendedName>
        <fullName evidence="1">UPF0173 metal-dependent hydrolase SH1218</fullName>
    </recommendedName>
</protein>
<keyword id="KW-0378">Hydrolase</keyword>
<sequence>MKLSFHGQSTIYFEGNGKKVIVDPFISGNDKCDLDEQTLDVDYIILTHGHADHFGDVVELANRNHATVIGSAELQGYLSTYHGVEDVHGMNIGGKAKFDFGSVKYVQAFHSSSFTHEDGIPVYLGMPMGLILEVEGKTIYHMGDTGLFSDMKLIAERHPVDVCFVPIGDNFTMGIDDASYAINEFVKPKISVPVHYNTFPLIEQDPQQFKDAVHEGEVQILEPGESVSF</sequence>
<gene>
    <name type="ordered locus">SH1218</name>
</gene>
<comment type="similarity">
    <text evidence="1">Belongs to the UPF0173 family.</text>
</comment>